<accession>Q5R8X4</accession>
<comment type="function">
    <text evidence="1 2">E1-like enzyme which specifically catalyzes the first step in ufmylation. Activates UFM1 by first adenylating its C-terminal glycine residue with ATP, and thereafter linking this residue to the side chain of a cysteine residue in E1, yielding a UFM1-E1 thioester and free AMP. Activates UFM1 via a trans-binding mechanism, in which UFM1 interacts with distinct sites in both subunits of the UBA5 homodimer. Trans-binding also promotes stabilization of the UBA5 homodimer, and enhances ATP-binding. Transfer of UFM1 from UBA5 to the E2-like enzyme UFC1 also takes place using a trans mechanism. Ufmylation plays a key role in various processes, such as ribosome recycling, response to DNA damage, interferon response or reticulophagy (also called ER-phagy) (By similarity). Ufmylation is essential for erythroid differentiation of both megakaryocytes and erythrocytes (By similarity).</text>
</comment>
<comment type="subunit">
    <text evidence="2">Homodimer; homodimerization is required for UFM1 activation. Interacts (via UIS motif) with UFM1; binds UFM1 via a trans-binding mechanism in which UFM1 interacts with distinct sites in both subunits of the UBA5 homodimer. Interacts (via C-terminus) with UFC1. Interacts (via UIS motif) with GABARAPL2 and, with lower affinity, with GABARAP and GABARAPL1.</text>
</comment>
<comment type="subcellular location">
    <subcellularLocation>
        <location evidence="2">Cytoplasm</location>
    </subcellularLocation>
    <subcellularLocation>
        <location evidence="2">Nucleus</location>
    </subcellularLocation>
    <subcellularLocation>
        <location evidence="2">Endoplasmic reticulum membrane</location>
    </subcellularLocation>
    <subcellularLocation>
        <location evidence="2">Golgi apparatus</location>
    </subcellularLocation>
    <text evidence="2">Localizes mainly in the cytoplasm, while it localizes to the nucleus in presence of SUMO2. Interaction with GABARAPL2 promotes localization to the endoplasmic reticulum membrane.</text>
</comment>
<comment type="domain">
    <text evidence="2">The UFC1-binding sequence (UFC) motif mediates interaction with UFC1.</text>
</comment>
<comment type="domain">
    <text evidence="2">The linker region is required to activate the active site of UFC1: it region moves next to active site of UFC1 to reduce the amount of water molecules in the vicinity of UFC1's active site and thereby elevate the nucleophilic activity of UFC1 active site.</text>
</comment>
<comment type="domain">
    <text evidence="2">The UFM1-interacting sequence (UIS) motif mediates interaction with both UFM1 and LC3/GABARAP proteins (GABARAP, GABARAPL1 and GABARAPL2).</text>
</comment>
<comment type="similarity">
    <text evidence="3">Belongs to the ubiquitin-activating E1 family. UBA5 subfamily.</text>
</comment>
<evidence type="ECO:0000250" key="1">
    <source>
        <dbReference type="UniProtKB" id="Q8VE47"/>
    </source>
</evidence>
<evidence type="ECO:0000250" key="2">
    <source>
        <dbReference type="UniProtKB" id="Q9GZZ9"/>
    </source>
</evidence>
<evidence type="ECO:0000305" key="3"/>
<evidence type="ECO:0000312" key="4">
    <source>
        <dbReference type="EMBL" id="CAH91786.1"/>
    </source>
</evidence>
<sequence>MAESVERLQQRVQELERELAQERSLQVPRSGDGGGGRVRIEKMSSEVVDSNPYSRLMALKRMGIVSDYEKIRTFAVAIVGVGGVGSVTAEMLTRCGIGKLLLFDYDKVELANMNRLFFQPHQAGLSKVQAAEHTLRNINPDVLFEVHNYNITTVENFQHFMDRISNGGLEEGKPVDLVLSCVDNFEARMTINTACNELGQTWMESGVSENAVSGHIQLIIPGESACFACAPPLVVAANIDEKSLKREGVCAASLPTTMGVVAGILVQNVLKFLLNFGTVSFYLGYNAMQDFFPTMSMKPNPQCDDRNCRKQQEEYKKKVAALPKQEVIQEKEEIIHEDNEWGIELVSEVSEEELKNSSGPVPDLPEGITVAYTIPKKQEDSVTEVTVEDSGESLEDLMAKMKNM</sequence>
<organism>
    <name type="scientific">Pongo abelii</name>
    <name type="common">Sumatran orangutan</name>
    <name type="synonym">Pongo pygmaeus abelii</name>
    <dbReference type="NCBI Taxonomy" id="9601"/>
    <lineage>
        <taxon>Eukaryota</taxon>
        <taxon>Metazoa</taxon>
        <taxon>Chordata</taxon>
        <taxon>Craniata</taxon>
        <taxon>Vertebrata</taxon>
        <taxon>Euteleostomi</taxon>
        <taxon>Mammalia</taxon>
        <taxon>Eutheria</taxon>
        <taxon>Euarchontoglires</taxon>
        <taxon>Primates</taxon>
        <taxon>Haplorrhini</taxon>
        <taxon>Catarrhini</taxon>
        <taxon>Hominidae</taxon>
        <taxon>Pongo</taxon>
    </lineage>
</organism>
<dbReference type="EMBL" id="CR859624">
    <property type="protein sequence ID" value="CAH91786.1"/>
    <property type="molecule type" value="mRNA"/>
</dbReference>
<dbReference type="RefSeq" id="NP_001126036.1">
    <property type="nucleotide sequence ID" value="NM_001132564.1"/>
</dbReference>
<dbReference type="SMR" id="Q5R8X4"/>
<dbReference type="FunCoup" id="Q5R8X4">
    <property type="interactions" value="3990"/>
</dbReference>
<dbReference type="STRING" id="9601.ENSPPYP00000015785"/>
<dbReference type="GeneID" id="100172985"/>
<dbReference type="KEGG" id="pon:100172985"/>
<dbReference type="CTD" id="79876"/>
<dbReference type="eggNOG" id="KOG2336">
    <property type="taxonomic scope" value="Eukaryota"/>
</dbReference>
<dbReference type="InParanoid" id="Q5R8X4"/>
<dbReference type="OrthoDB" id="206053at2759"/>
<dbReference type="Proteomes" id="UP000001595">
    <property type="component" value="Unplaced"/>
</dbReference>
<dbReference type="GO" id="GO:0005737">
    <property type="term" value="C:cytoplasm"/>
    <property type="evidence" value="ECO:0000250"/>
    <property type="project" value="UniProtKB"/>
</dbReference>
<dbReference type="GO" id="GO:0005829">
    <property type="term" value="C:cytosol"/>
    <property type="evidence" value="ECO:0007669"/>
    <property type="project" value="TreeGrafter"/>
</dbReference>
<dbReference type="GO" id="GO:0005789">
    <property type="term" value="C:endoplasmic reticulum membrane"/>
    <property type="evidence" value="ECO:0000250"/>
    <property type="project" value="UniProtKB"/>
</dbReference>
<dbReference type="GO" id="GO:0005794">
    <property type="term" value="C:Golgi apparatus"/>
    <property type="evidence" value="ECO:0007669"/>
    <property type="project" value="UniProtKB-SubCell"/>
</dbReference>
<dbReference type="GO" id="GO:0005634">
    <property type="term" value="C:nucleus"/>
    <property type="evidence" value="ECO:0007669"/>
    <property type="project" value="UniProtKB-SubCell"/>
</dbReference>
<dbReference type="GO" id="GO:0005524">
    <property type="term" value="F:ATP binding"/>
    <property type="evidence" value="ECO:0007669"/>
    <property type="project" value="UniProtKB-KW"/>
</dbReference>
<dbReference type="GO" id="GO:0042803">
    <property type="term" value="F:protein homodimerization activity"/>
    <property type="evidence" value="ECO:0000250"/>
    <property type="project" value="UniProtKB"/>
</dbReference>
<dbReference type="GO" id="GO:0071566">
    <property type="term" value="F:UFM1 activating enzyme activity"/>
    <property type="evidence" value="ECO:0000250"/>
    <property type="project" value="UniProtKB"/>
</dbReference>
<dbReference type="GO" id="GO:0008270">
    <property type="term" value="F:zinc ion binding"/>
    <property type="evidence" value="ECO:0000250"/>
    <property type="project" value="UniProtKB"/>
</dbReference>
<dbReference type="GO" id="GO:0030218">
    <property type="term" value="P:erythrocyte differentiation"/>
    <property type="evidence" value="ECO:0000250"/>
    <property type="project" value="UniProtKB"/>
</dbReference>
<dbReference type="GO" id="GO:0030219">
    <property type="term" value="P:megakaryocyte differentiation"/>
    <property type="evidence" value="ECO:0000250"/>
    <property type="project" value="UniProtKB"/>
</dbReference>
<dbReference type="GO" id="GO:1990592">
    <property type="term" value="P:protein K69-linked ufmylation"/>
    <property type="evidence" value="ECO:0000250"/>
    <property type="project" value="UniProtKB"/>
</dbReference>
<dbReference type="GO" id="GO:0071569">
    <property type="term" value="P:protein ufmylation"/>
    <property type="evidence" value="ECO:0000250"/>
    <property type="project" value="UniProtKB"/>
</dbReference>
<dbReference type="GO" id="GO:0033146">
    <property type="term" value="P:regulation of intracellular estrogen receptor signaling pathway"/>
    <property type="evidence" value="ECO:0000250"/>
    <property type="project" value="UniProtKB"/>
</dbReference>
<dbReference type="GO" id="GO:0034976">
    <property type="term" value="P:response to endoplasmic reticulum stress"/>
    <property type="evidence" value="ECO:0000250"/>
    <property type="project" value="UniProtKB"/>
</dbReference>
<dbReference type="GO" id="GO:0061709">
    <property type="term" value="P:reticulophagy"/>
    <property type="evidence" value="ECO:0000250"/>
    <property type="project" value="UniProtKB"/>
</dbReference>
<dbReference type="CDD" id="cd00757">
    <property type="entry name" value="ThiF_MoeB_HesA_family"/>
    <property type="match status" value="1"/>
</dbReference>
<dbReference type="FunFam" id="3.40.50.720:FF:000066">
    <property type="entry name" value="Putative ubiquitin-like modifier-activating enzyme 5"/>
    <property type="match status" value="1"/>
</dbReference>
<dbReference type="Gene3D" id="3.40.50.720">
    <property type="entry name" value="NAD(P)-binding Rossmann-like Domain"/>
    <property type="match status" value="1"/>
</dbReference>
<dbReference type="InterPro" id="IPR029752">
    <property type="entry name" value="D-isomer_DH_CS1"/>
</dbReference>
<dbReference type="InterPro" id="IPR045886">
    <property type="entry name" value="ThiF/MoeB/HesA"/>
</dbReference>
<dbReference type="InterPro" id="IPR000594">
    <property type="entry name" value="ThiF_NAD_FAD-bd"/>
</dbReference>
<dbReference type="InterPro" id="IPR035985">
    <property type="entry name" value="Ubiquitin-activating_enz"/>
</dbReference>
<dbReference type="PANTHER" id="PTHR10953">
    <property type="entry name" value="UBIQUITIN-ACTIVATING ENZYME E1"/>
    <property type="match status" value="1"/>
</dbReference>
<dbReference type="PANTHER" id="PTHR10953:SF9">
    <property type="entry name" value="UBIQUITIN-LIKE MODIFIER-ACTIVATING ENZYME 5"/>
    <property type="match status" value="1"/>
</dbReference>
<dbReference type="Pfam" id="PF00899">
    <property type="entry name" value="ThiF"/>
    <property type="match status" value="1"/>
</dbReference>
<dbReference type="SUPFAM" id="SSF69572">
    <property type="entry name" value="Activating enzymes of the ubiquitin-like proteins"/>
    <property type="match status" value="1"/>
</dbReference>
<proteinExistence type="evidence at transcript level"/>
<feature type="chain" id="PRO_0000194972" description="Ubiquitin-like modifier-activating enzyme 5">
    <location>
        <begin position="1"/>
        <end position="404"/>
    </location>
</feature>
<feature type="region of interest" description="Linker" evidence="2">
    <location>
        <begin position="347"/>
        <end position="377"/>
    </location>
</feature>
<feature type="short sequence motif" description="UFM1-interacting sequence (UIS)" evidence="2">
    <location>
        <begin position="334"/>
        <end position="346"/>
    </location>
</feature>
<feature type="short sequence motif" description="UFC1-binding sequence (UFC)" evidence="2">
    <location>
        <begin position="389"/>
        <end position="404"/>
    </location>
</feature>
<feature type="active site" description="Glycyl thioester intermediate" evidence="2">
    <location>
        <position position="250"/>
    </location>
</feature>
<feature type="binding site" evidence="2">
    <location>
        <position position="83"/>
    </location>
    <ligand>
        <name>ATP</name>
        <dbReference type="ChEBI" id="CHEBI:30616"/>
    </ligand>
</feature>
<feature type="binding site" evidence="2">
    <location>
        <position position="104"/>
    </location>
    <ligand>
        <name>ATP</name>
        <dbReference type="ChEBI" id="CHEBI:30616"/>
    </ligand>
</feature>
<feature type="binding site" evidence="2">
    <location>
        <position position="127"/>
    </location>
    <ligand>
        <name>ATP</name>
        <dbReference type="ChEBI" id="CHEBI:30616"/>
    </ligand>
</feature>
<feature type="binding site" evidence="2">
    <location>
        <position position="150"/>
    </location>
    <ligand>
        <name>ATP</name>
        <dbReference type="ChEBI" id="CHEBI:30616"/>
    </ligand>
</feature>
<feature type="binding site" evidence="2">
    <location>
        <position position="184"/>
    </location>
    <ligand>
        <name>ATP</name>
        <dbReference type="ChEBI" id="CHEBI:30616"/>
    </ligand>
</feature>
<feature type="binding site" evidence="2">
    <location>
        <position position="226"/>
    </location>
    <ligand>
        <name>Zn(2+)</name>
        <dbReference type="ChEBI" id="CHEBI:29105"/>
    </ligand>
</feature>
<feature type="binding site" evidence="2">
    <location>
        <position position="229"/>
    </location>
    <ligand>
        <name>Zn(2+)</name>
        <dbReference type="ChEBI" id="CHEBI:29105"/>
    </ligand>
</feature>
<feature type="binding site" evidence="2">
    <location>
        <position position="303"/>
    </location>
    <ligand>
        <name>Zn(2+)</name>
        <dbReference type="ChEBI" id="CHEBI:29105"/>
    </ligand>
</feature>
<feature type="binding site" evidence="2">
    <location>
        <position position="308"/>
    </location>
    <ligand>
        <name>Zn(2+)</name>
        <dbReference type="ChEBI" id="CHEBI:29105"/>
    </ligand>
</feature>
<feature type="modified residue" description="Phosphoserine" evidence="2">
    <location>
        <position position="45"/>
    </location>
</feature>
<feature type="modified residue" description="Phosphoserine" evidence="2">
    <location>
        <position position="358"/>
    </location>
</feature>
<feature type="modified residue" description="Phosphoserine" evidence="1">
    <location>
        <position position="393"/>
    </location>
</feature>
<reference evidence="4" key="1">
    <citation type="submission" date="2004-11" db="EMBL/GenBank/DDBJ databases">
        <authorList>
            <consortium name="The German cDNA consortium"/>
        </authorList>
    </citation>
    <scope>NUCLEOTIDE SEQUENCE [LARGE SCALE MRNA]</scope>
    <source>
        <tissue evidence="4">Brain cortex</tissue>
    </source>
</reference>
<name>UBA5_PONAB</name>
<protein>
    <recommendedName>
        <fullName evidence="3">Ubiquitin-like modifier-activating enzyme 5</fullName>
        <shortName evidence="2">Ubiquitin-activating enzyme 5</shortName>
    </recommendedName>
    <alternativeName>
        <fullName evidence="3">UFM1-activating enzyme</fullName>
    </alternativeName>
</protein>
<keyword id="KW-0067">ATP-binding</keyword>
<keyword id="KW-0963">Cytoplasm</keyword>
<keyword id="KW-0256">Endoplasmic reticulum</keyword>
<keyword id="KW-0333">Golgi apparatus</keyword>
<keyword id="KW-0472">Membrane</keyword>
<keyword id="KW-0479">Metal-binding</keyword>
<keyword id="KW-0547">Nucleotide-binding</keyword>
<keyword id="KW-0539">Nucleus</keyword>
<keyword id="KW-0597">Phosphoprotein</keyword>
<keyword id="KW-1185">Reference proteome</keyword>
<keyword id="KW-0833">Ubl conjugation pathway</keyword>
<keyword id="KW-0862">Zinc</keyword>
<gene>
    <name evidence="2" type="primary">UBA5</name>
</gene>